<reference key="1">
    <citation type="submission" date="2007-05" db="EMBL/GenBank/DDBJ databases">
        <title>Complete sequence of Geobacter uraniireducens Rf4.</title>
        <authorList>
            <consortium name="US DOE Joint Genome Institute"/>
            <person name="Copeland A."/>
            <person name="Lucas S."/>
            <person name="Lapidus A."/>
            <person name="Barry K."/>
            <person name="Detter J.C."/>
            <person name="Glavina del Rio T."/>
            <person name="Hammon N."/>
            <person name="Israni S."/>
            <person name="Dalin E."/>
            <person name="Tice H."/>
            <person name="Pitluck S."/>
            <person name="Chertkov O."/>
            <person name="Brettin T."/>
            <person name="Bruce D."/>
            <person name="Han C."/>
            <person name="Schmutz J."/>
            <person name="Larimer F."/>
            <person name="Land M."/>
            <person name="Hauser L."/>
            <person name="Kyrpides N."/>
            <person name="Mikhailova N."/>
            <person name="Shelobolina E."/>
            <person name="Aklujkar M."/>
            <person name="Lovley D."/>
            <person name="Richardson P."/>
        </authorList>
    </citation>
    <scope>NUCLEOTIDE SEQUENCE [LARGE SCALE GENOMIC DNA]</scope>
    <source>
        <strain>ATCC BAA-1134 / JCM 13001 / Rf4</strain>
    </source>
</reference>
<feature type="chain" id="PRO_0000382561" description="UPF0502 protein Gura_0277">
    <location>
        <begin position="1"/>
        <end position="219"/>
    </location>
</feature>
<protein>
    <recommendedName>
        <fullName evidence="1">UPF0502 protein Gura_0277</fullName>
    </recommendedName>
</protein>
<organism>
    <name type="scientific">Geotalea uraniireducens (strain Rf4)</name>
    <name type="common">Geobacter uraniireducens</name>
    <dbReference type="NCBI Taxonomy" id="351605"/>
    <lineage>
        <taxon>Bacteria</taxon>
        <taxon>Pseudomonadati</taxon>
        <taxon>Thermodesulfobacteriota</taxon>
        <taxon>Desulfuromonadia</taxon>
        <taxon>Geobacterales</taxon>
        <taxon>Geobacteraceae</taxon>
        <taxon>Geotalea</taxon>
    </lineage>
</organism>
<proteinExistence type="inferred from homology"/>
<gene>
    <name type="ordered locus">Gura_0277</name>
</gene>
<keyword id="KW-1185">Reference proteome</keyword>
<sequence length="219" mass="24803">MEMHLNDMEVRVLGCLIEKELTTPEYYPLTLNALTNACNQKSNRDPVLTREEVEVVRALDSLKFKQLALLSAEGGRVPKYRHTLVEKLRLDPPELAVLAELLLRGPQTVGELRTRGERMHPFPDLAAVEEVLGELMARTPPLVTRLPRQQGRKESRHAHLFAGEPELATAELTPSPEAARLKVMAENERIAKLEEEVAGLRSEVVELRRLVDEFKSQFE</sequence>
<dbReference type="EMBL" id="CP000698">
    <property type="protein sequence ID" value="ABQ24493.1"/>
    <property type="molecule type" value="Genomic_DNA"/>
</dbReference>
<dbReference type="RefSeq" id="WP_011937220.1">
    <property type="nucleotide sequence ID" value="NC_009483.1"/>
</dbReference>
<dbReference type="SMR" id="A5GD54"/>
<dbReference type="STRING" id="351605.Gura_0277"/>
<dbReference type="KEGG" id="gur:Gura_0277"/>
<dbReference type="HOGENOM" id="CLU_057831_1_0_7"/>
<dbReference type="OrthoDB" id="9784785at2"/>
<dbReference type="Proteomes" id="UP000006695">
    <property type="component" value="Chromosome"/>
</dbReference>
<dbReference type="Gene3D" id="1.10.10.10">
    <property type="entry name" value="Winged helix-like DNA-binding domain superfamily/Winged helix DNA-binding domain"/>
    <property type="match status" value="2"/>
</dbReference>
<dbReference type="HAMAP" id="MF_01584">
    <property type="entry name" value="UPF0502"/>
    <property type="match status" value="1"/>
</dbReference>
<dbReference type="InterPro" id="IPR007432">
    <property type="entry name" value="DUF480"/>
</dbReference>
<dbReference type="InterPro" id="IPR036388">
    <property type="entry name" value="WH-like_DNA-bd_sf"/>
</dbReference>
<dbReference type="InterPro" id="IPR036390">
    <property type="entry name" value="WH_DNA-bd_sf"/>
</dbReference>
<dbReference type="PANTHER" id="PTHR38768">
    <property type="entry name" value="UPF0502 PROTEIN YCEH"/>
    <property type="match status" value="1"/>
</dbReference>
<dbReference type="PANTHER" id="PTHR38768:SF1">
    <property type="entry name" value="UPF0502 PROTEIN YCEH"/>
    <property type="match status" value="1"/>
</dbReference>
<dbReference type="Pfam" id="PF04337">
    <property type="entry name" value="DUF480"/>
    <property type="match status" value="1"/>
</dbReference>
<dbReference type="SUPFAM" id="SSF46785">
    <property type="entry name" value="Winged helix' DNA-binding domain"/>
    <property type="match status" value="2"/>
</dbReference>
<name>Y277_GEOUR</name>
<comment type="similarity">
    <text evidence="1">Belongs to the UPF0502 family.</text>
</comment>
<evidence type="ECO:0000255" key="1">
    <source>
        <dbReference type="HAMAP-Rule" id="MF_01584"/>
    </source>
</evidence>
<accession>A5GD54</accession>